<feature type="chain" id="PRO_0000371432" description="Cingulin">
    <location>
        <begin position="1"/>
        <end position="1153"/>
    </location>
</feature>
<feature type="region of interest" description="Head" evidence="1">
    <location>
        <begin position="1"/>
        <end position="342"/>
    </location>
</feature>
<feature type="region of interest" description="Disordered" evidence="5">
    <location>
        <begin position="17"/>
        <end position="37"/>
    </location>
</feature>
<feature type="region of interest" description="Interaction with TJP1/ZO1" evidence="3">
    <location>
        <begin position="44"/>
        <end position="57"/>
    </location>
</feature>
<feature type="region of interest" description="Disordered" evidence="5">
    <location>
        <begin position="131"/>
        <end position="151"/>
    </location>
</feature>
<feature type="region of interest" description="Disordered" evidence="5">
    <location>
        <begin position="177"/>
        <end position="253"/>
    </location>
</feature>
<feature type="region of interest" description="Disordered" evidence="5">
    <location>
        <begin position="755"/>
        <end position="796"/>
    </location>
</feature>
<feature type="region of interest" description="Disordered" evidence="5">
    <location>
        <begin position="823"/>
        <end position="861"/>
    </location>
</feature>
<feature type="region of interest" description="Disordered" evidence="5">
    <location>
        <begin position="1110"/>
        <end position="1131"/>
    </location>
</feature>
<feature type="region of interest" description="Tail" evidence="1">
    <location>
        <begin position="1111"/>
        <end position="1153"/>
    </location>
</feature>
<feature type="coiled-coil region" evidence="4">
    <location>
        <begin position="343"/>
        <end position="1110"/>
    </location>
</feature>
<feature type="short sequence motif" description="ZIM">
    <location>
        <begin position="38"/>
        <end position="52"/>
    </location>
</feature>
<feature type="compositionally biased region" description="Basic and acidic residues" evidence="5">
    <location>
        <begin position="207"/>
        <end position="220"/>
    </location>
</feature>
<feature type="compositionally biased region" description="Basic and acidic residues" evidence="5">
    <location>
        <begin position="772"/>
        <end position="796"/>
    </location>
</feature>
<feature type="compositionally biased region" description="Basic and acidic residues" evidence="5">
    <location>
        <begin position="827"/>
        <end position="853"/>
    </location>
</feature>
<feature type="compositionally biased region" description="Polar residues" evidence="5">
    <location>
        <begin position="1115"/>
        <end position="1124"/>
    </location>
</feature>
<feature type="modified residue" description="Phosphoserine" evidence="2">
    <location>
        <position position="86"/>
    </location>
</feature>
<feature type="modified residue" description="Phosphoserine" evidence="3">
    <location>
        <position position="126"/>
    </location>
</feature>
<feature type="modified residue" description="Phosphoserine" evidence="3">
    <location>
        <position position="128"/>
    </location>
</feature>
<feature type="modified residue" description="Phosphoserine" evidence="3">
    <location>
        <position position="131"/>
    </location>
</feature>
<feature type="modified residue" description="Phosphoserine" evidence="3">
    <location>
        <position position="146"/>
    </location>
</feature>
<feature type="modified residue" description="Phosphoserine" evidence="3">
    <location>
        <position position="205"/>
    </location>
</feature>
<feature type="modified residue" description="Phosphoserine" evidence="3">
    <location>
        <position position="208"/>
    </location>
</feature>
<feature type="modified residue" description="Phosphoserine" evidence="2">
    <location>
        <position position="324"/>
    </location>
</feature>
<feature type="modified residue" description="N6-acetyllysine" evidence="3">
    <location>
        <position position="562"/>
    </location>
</feature>
<feature type="modified residue" description="Phosphoserine" evidence="3">
    <location>
        <position position="1125"/>
    </location>
</feature>
<feature type="modified residue" description="Phosphoserine" evidence="3">
    <location>
        <position position="1126"/>
    </location>
</feature>
<keyword id="KW-0007">Acetylation</keyword>
<keyword id="KW-0965">Cell junction</keyword>
<keyword id="KW-0175">Coiled coil</keyword>
<keyword id="KW-0597">Phosphoprotein</keyword>
<keyword id="KW-0796">Tight junction</keyword>
<reference key="1">
    <citation type="submission" date="2008-06" db="EMBL/GenBank/DDBJ databases">
        <title>NISC comparative sequencing initiative.</title>
        <authorList>
            <person name="Antonellis A."/>
            <person name="Benjamin B."/>
            <person name="Blakesley R.W."/>
            <person name="Bouffard G.G."/>
            <person name="Brinkley C."/>
            <person name="Brooks S."/>
            <person name="Chu G."/>
            <person name="Chub I."/>
            <person name="Coleman H."/>
            <person name="Fuksenko T."/>
            <person name="Gestole M."/>
            <person name="Gregory M."/>
            <person name="Guan X."/>
            <person name="Gupta J."/>
            <person name="Gurson N."/>
            <person name="Han E."/>
            <person name="Han J."/>
            <person name="Hansen N."/>
            <person name="Hargrove A."/>
            <person name="Hines-Harris K."/>
            <person name="Ho S.-L."/>
            <person name="Hu P."/>
            <person name="Hunter G."/>
            <person name="Hurle B."/>
            <person name="Idol J.R."/>
            <person name="Johnson T."/>
            <person name="Knight E."/>
            <person name="Kwong P."/>
            <person name="Lee-Lin S.-Q."/>
            <person name="Legaspi R."/>
            <person name="Madden M."/>
            <person name="Maduro Q.L."/>
            <person name="Maduro V.B."/>
            <person name="Margulies E.H."/>
            <person name="Masiello C."/>
            <person name="Maskeri B."/>
            <person name="McDowell J."/>
            <person name="Merkulov G."/>
            <person name="Montemayor C."/>
            <person name="Mullikin J.C."/>
            <person name="Park M."/>
            <person name="Prasad A."/>
            <person name="Ramsahoye C."/>
            <person name="Reddix-Dugue N."/>
            <person name="Riebow N."/>
            <person name="Schandler K."/>
            <person name="Schueler M.G."/>
            <person name="Sison C."/>
            <person name="Smith L."/>
            <person name="Stantripop S."/>
            <person name="Thomas J.W."/>
            <person name="Thomas P.J."/>
            <person name="Tsipouri V."/>
            <person name="Young A."/>
            <person name="Green E.D."/>
        </authorList>
    </citation>
    <scope>NUCLEOTIDE SEQUENCE [LARGE SCALE GENOMIC DNA]</scope>
</reference>
<name>CING_SORAR</name>
<evidence type="ECO:0000250" key="1"/>
<evidence type="ECO:0000250" key="2">
    <source>
        <dbReference type="UniProtKB" id="P59242"/>
    </source>
</evidence>
<evidence type="ECO:0000250" key="3">
    <source>
        <dbReference type="UniProtKB" id="Q9P2M7"/>
    </source>
</evidence>
<evidence type="ECO:0000255" key="4"/>
<evidence type="ECO:0000256" key="5">
    <source>
        <dbReference type="SAM" id="MobiDB-lite"/>
    </source>
</evidence>
<evidence type="ECO:0000305" key="6"/>
<proteinExistence type="inferred from homology"/>
<accession>B3EX63</accession>
<sequence length="1153" mass="130489">MAEPRGPVDHGVQIRFITEPAGDAQMRTGRRPAKDARANTYGVAVRVQGIAGQPFVVLNSGEKGSESFGVQIKGAHRQGPPGAPHSDLELPAEHSRPLAQENAGTWQGSVSDEELGDPWRGRLLRSQSQASLLGPAPLGPGHRSTSLLELGPPGLGAGSAIDTAPLSSVDTLIHKFDRHQGGQARGRTGRRMRALPAEQRKRSQSLDSRHLRDPPEDRRSPIPWAPPSRPGSAGSSKQPAPKPIPTSSYSRARQTQDWVLQNFEEPRTRAQDPAVLQFKSTPDLLRDQQEAAPPGSVEHVKAALYGILREGSSESDASVRRKVSLVLEQMQPLVMTTGSAKVLAGQGELAQKVEELQRKLDEEVKKRQVLEPSRLELEQQLEEKAEECLRLQELLERQKGETRQSGTELQNLRLLLDQAGRVRSELETQVMELQDQLKQGPVPAKEGLMKDLLETRELLEEVLEGKQRVEEQLRQRERELTALKGALKEEVASRDQEVEHVRQQCQRDTEQLRKSIQDASQDQAALEAERQKMSALVRGLQRELEETSEETGHWQTMFQKNKEELRAAKQELLQLRMEKDEMEEELGEKMEALQRELGQARAGAGGSRQVEELRKLQGEAERVRELEQQNLQLQKKTQQLSQDCAEATKARGARMAAEAEAALLVQRRTAVETTLQETQGENDEFRRRILGLEQQLKETRGLAEGGEAAEARLRDKLQRLEVEKQRLEEALSEAQAEEGSLAAAKRALEARLEEAQRGLSRMGQEQQALSRALEEEGKQREALRRGKAELEEQKRLLDRTVERLNKELEQIGEDSKQALHQLQSQLEDYKEKSRREVADAQRQAKEWASEAEKSSGGLSRLQDETQRLRQTLQASQADLDTARLDKELLAQRLQGLEQEAEKKRRSQDDRTRQVKSLEEKVSRLEMELDEERNTVELLTDRINRSRDQVDQLRTELMQERSARQDLECDKISLERQNKDLKGRLASLEGFQKPSASLSQLESQNRELQERLQAEDREKTVLQSTNRKLERRVKELSIQIDDERQHVNDQKDQLSLKVKALKRQVDEAEEEIERLDGLRKKAQRELEEQHEANEQLQARIRALEKDSWRKAARSAAESSLQQEGLSSDEEFDGVYNPNSIASLLTESGLQTSSC</sequence>
<dbReference type="EMBL" id="DP000772">
    <property type="protein sequence ID" value="ACE75821.1"/>
    <property type="molecule type" value="Genomic_DNA"/>
</dbReference>
<dbReference type="SMR" id="B3EX63"/>
<dbReference type="GO" id="GO:0005923">
    <property type="term" value="C:bicellular tight junction"/>
    <property type="evidence" value="ECO:0007669"/>
    <property type="project" value="UniProtKB-SubCell"/>
</dbReference>
<dbReference type="GO" id="GO:0016459">
    <property type="term" value="C:myosin complex"/>
    <property type="evidence" value="ECO:0007669"/>
    <property type="project" value="InterPro"/>
</dbReference>
<dbReference type="GO" id="GO:0008017">
    <property type="term" value="F:microtubule binding"/>
    <property type="evidence" value="ECO:0007669"/>
    <property type="project" value="TreeGrafter"/>
</dbReference>
<dbReference type="GO" id="GO:0000226">
    <property type="term" value="P:microtubule cytoskeleton organization"/>
    <property type="evidence" value="ECO:0007669"/>
    <property type="project" value="TreeGrafter"/>
</dbReference>
<dbReference type="InterPro" id="IPR002928">
    <property type="entry name" value="Myosin_tail"/>
</dbReference>
<dbReference type="PANTHER" id="PTHR46349:SF4">
    <property type="entry name" value="CINGULIN"/>
    <property type="match status" value="1"/>
</dbReference>
<dbReference type="PANTHER" id="PTHR46349">
    <property type="entry name" value="CINGULIN-LIKE PROTEIN 1-RELATED"/>
    <property type="match status" value="1"/>
</dbReference>
<dbReference type="Pfam" id="PF01576">
    <property type="entry name" value="Myosin_tail_1"/>
    <property type="match status" value="1"/>
</dbReference>
<protein>
    <recommendedName>
        <fullName evidence="3">Cingulin</fullName>
    </recommendedName>
</protein>
<gene>
    <name evidence="3" type="primary">CGN</name>
</gene>
<comment type="function">
    <text evidence="1">Probably plays a role in the formation and regulation of the tight junction (TJ) paracellular permeability barrier.</text>
</comment>
<comment type="subunit">
    <text evidence="3">Homodimer (By similarity). Interacts with TJP1/ZO1 and SPEF1 (By similarity).</text>
</comment>
<comment type="subcellular location">
    <subcellularLocation>
        <location evidence="2">Cell junction</location>
        <location evidence="2">Tight junction</location>
    </subcellularLocation>
    <text evidence="2 3">Localizes to the apical junction complex composed of tight and adherens junctions. Colocalizes with SPEF1 at sites of cell-cell contact in intestinal epithelial cells.</text>
</comment>
<comment type="domain">
    <text evidence="1">Deletion of the TJP1/ZO1 interaction motif (ZIM) decreases but does not abolish colocalization with TJP1/ZO1.</text>
</comment>
<comment type="similarity">
    <text evidence="6">Belongs to the cingulin family.</text>
</comment>
<organism>
    <name type="scientific">Sorex araneus</name>
    <name type="common">Eurasian common shrew</name>
    <name type="synonym">European shrew</name>
    <dbReference type="NCBI Taxonomy" id="42254"/>
    <lineage>
        <taxon>Eukaryota</taxon>
        <taxon>Metazoa</taxon>
        <taxon>Chordata</taxon>
        <taxon>Craniata</taxon>
        <taxon>Vertebrata</taxon>
        <taxon>Euteleostomi</taxon>
        <taxon>Mammalia</taxon>
        <taxon>Eutheria</taxon>
        <taxon>Laurasiatheria</taxon>
        <taxon>Eulipotyphla</taxon>
        <taxon>Soricidae</taxon>
        <taxon>Soricinae</taxon>
        <taxon>Sorex</taxon>
    </lineage>
</organism>